<organism>
    <name type="scientific">Bos taurus</name>
    <name type="common">Bovine</name>
    <dbReference type="NCBI Taxonomy" id="9913"/>
    <lineage>
        <taxon>Eukaryota</taxon>
        <taxon>Metazoa</taxon>
        <taxon>Chordata</taxon>
        <taxon>Craniata</taxon>
        <taxon>Vertebrata</taxon>
        <taxon>Euteleostomi</taxon>
        <taxon>Mammalia</taxon>
        <taxon>Eutheria</taxon>
        <taxon>Laurasiatheria</taxon>
        <taxon>Artiodactyla</taxon>
        <taxon>Ruminantia</taxon>
        <taxon>Pecora</taxon>
        <taxon>Bovidae</taxon>
        <taxon>Bovinae</taxon>
        <taxon>Bos</taxon>
    </lineage>
</organism>
<keyword id="KW-0024">Alternative initiation</keyword>
<keyword id="KW-1003">Cell membrane</keyword>
<keyword id="KW-0868">Chloride</keyword>
<keyword id="KW-0869">Chloride channel</keyword>
<keyword id="KW-1015">Disulfide bond</keyword>
<keyword id="KW-0325">Glycoprotein</keyword>
<keyword id="KW-0407">Ion channel</keyword>
<keyword id="KW-0406">Ion transport</keyword>
<keyword id="KW-0472">Membrane</keyword>
<keyword id="KW-0628">Postsynaptic cell membrane</keyword>
<keyword id="KW-1185">Reference proteome</keyword>
<keyword id="KW-0732">Signal</keyword>
<keyword id="KW-0770">Synapse</keyword>
<keyword id="KW-0812">Transmembrane</keyword>
<keyword id="KW-1133">Transmembrane helix</keyword>
<keyword id="KW-0813">Transport</keyword>
<evidence type="ECO:0000250" key="1">
    <source>
        <dbReference type="UniProtKB" id="P24046"/>
    </source>
</evidence>
<evidence type="ECO:0000250" key="2">
    <source>
        <dbReference type="UniProtKB" id="P28476"/>
    </source>
</evidence>
<evidence type="ECO:0000250" key="3">
    <source>
        <dbReference type="UniProtKB" id="P47742"/>
    </source>
</evidence>
<evidence type="ECO:0000250" key="4">
    <source>
        <dbReference type="UniProtKB" id="P56476"/>
    </source>
</evidence>
<evidence type="ECO:0000255" key="5"/>
<evidence type="ECO:0000303" key="6">
    <source ref="1"/>
</evidence>
<evidence type="ECO:0000305" key="7"/>
<comment type="function">
    <text evidence="1 3 4">Rho subunit of the pentameric ligand-gated chloride channels responsible for mediating the effects of gamma-aminobutyric acid (GABA), the major inhibitory neurotransmitter in the brain (By similarity). Rho-containing GABA-gated chloride channels are a subclass of GABA(A) receptors (GABAARs) entirely composed of rho subunits, where GABA molecules bind at the rho intersubunit interfaces (By similarity). When activated by GABA, rho-GABAARs selectively allow the flow of chloride anions across the cell membrane down their electrochemical gradient (By similarity). Rho-2 GABAARs may contribute to the regulation of glial development in the cerebellum by controlling extrasynaptic transmission. Rho-2 GABAARs are also involved in neuronal tonic (extrasynaptic) and phasic (synaptic) transmission in the Purkinje neurons of the cerebellum (By similarity). Rho-2 GABAARs expressed in retina may play a role in retinal neurotransmission (By similarity).</text>
</comment>
<comment type="catalytic activity">
    <reaction evidence="3">
        <text>chloride(in) = chloride(out)</text>
        <dbReference type="Rhea" id="RHEA:29823"/>
        <dbReference type="ChEBI" id="CHEBI:17996"/>
    </reaction>
</comment>
<comment type="subunit">
    <text evidence="3">Three rho subunits (rho-1/GBRR1, rho-2/GBRR2 and rho-3/GBRR3) coassemble either to form functional homopentamers or heteropentamers. Rho-2 is unable to form a functional homopentamer. Interacts with SQSTM1.</text>
</comment>
<comment type="subcellular location">
    <subcellularLocation>
        <location evidence="4">Postsynaptic cell membrane</location>
        <topology evidence="5">Multi-pass membrane protein</topology>
    </subcellularLocation>
    <subcellularLocation>
        <location evidence="4">Cell membrane</location>
        <topology evidence="5">Multi-pass membrane protein</topology>
    </subcellularLocation>
</comment>
<comment type="alternative products">
    <event type="alternative initiation"/>
    <isoform>
        <id>Q0II76-1</id>
        <name>1</name>
        <sequence type="displayed"/>
    </isoform>
    <isoform>
        <id>Q0II76-2</id>
        <name>2</name>
        <sequence type="described" ref="VSP_044372"/>
    </isoform>
</comment>
<comment type="domain">
    <text evidence="1">GABAARs subunits share a common topological structure: a peptide sequence made up of a long extracellular N-terminal, four transmembrane domains, intracellular or cytoplasmic domain located between the third and the fourth transmembrane domains.</text>
</comment>
<comment type="miscellaneous">
    <molecule>Isoform 2</molecule>
    <text evidence="7">Isoform 2 could be translated from an upstream initiator ATG located in frame within the first coding exon. The probability of a signal peptide within this isoform is very low.</text>
</comment>
<comment type="similarity">
    <text evidence="7">Belongs to the ligand-gated ion channel (TC 1.A.9) family. Gamma-aminobutyric acid receptor (TC 1.A.9.5) subfamily. GABRR2 sub-subfamily.</text>
</comment>
<reference key="1">
    <citation type="submission" date="2006-08" db="EMBL/GenBank/DDBJ databases">
        <authorList>
            <consortium name="NIH - Mammalian Gene Collection (MGC) project"/>
        </authorList>
    </citation>
    <scope>NUCLEOTIDE SEQUENCE [LARGE SCALE MRNA] (ISOFORM 2)</scope>
    <source>
        <strain>Hereford</strain>
        <tissue>Hypothalamus</tissue>
    </source>
</reference>
<feature type="signal peptide" evidence="5">
    <location>
        <begin position="1"/>
        <end position="20"/>
    </location>
</feature>
<feature type="chain" id="PRO_0000282336" description="Gamma-aminobutyric acid receptor subunit rho-2" evidence="5">
    <location>
        <begin position="21"/>
        <end position="465"/>
    </location>
</feature>
<feature type="topological domain" description="Extracellular" evidence="7">
    <location>
        <begin position="21"/>
        <end position="260"/>
    </location>
</feature>
<feature type="transmembrane region" description="Helical" evidence="5">
    <location>
        <begin position="261"/>
        <end position="281"/>
    </location>
</feature>
<feature type="topological domain" description="Cytoplasmic" evidence="7">
    <location>
        <begin position="282"/>
        <end position="293"/>
    </location>
</feature>
<feature type="transmembrane region" description="Helical" evidence="5">
    <location>
        <begin position="294"/>
        <end position="314"/>
    </location>
</feature>
<feature type="topological domain" description="Extracellular" evidence="7">
    <location>
        <begin position="315"/>
        <end position="325"/>
    </location>
</feature>
<feature type="transmembrane region" description="Helical" evidence="5">
    <location>
        <begin position="326"/>
        <end position="346"/>
    </location>
</feature>
<feature type="topological domain" description="Cytoplasmic" evidence="7">
    <location>
        <begin position="347"/>
        <end position="444"/>
    </location>
</feature>
<feature type="transmembrane region" description="Helical" evidence="5">
    <location>
        <begin position="445"/>
        <end position="465"/>
    </location>
</feature>
<feature type="binding site" description="in chain A" evidence="1">
    <location>
        <position position="105"/>
    </location>
    <ligand>
        <name>4-aminobutanoate</name>
        <dbReference type="ChEBI" id="CHEBI:59888"/>
        <note>ligand shared between two neighboring rho subunits</note>
    </ligand>
</feature>
<feature type="binding site" description="in chain A" evidence="1">
    <location>
        <position position="169"/>
    </location>
    <ligand>
        <name>4-aminobutanoate</name>
        <dbReference type="ChEBI" id="CHEBI:59888"/>
        <note>ligand shared between two neighboring rho subunits</note>
    </ligand>
</feature>
<feature type="binding site" description="in chain B" evidence="1">
    <location>
        <position position="197"/>
    </location>
    <ligand>
        <name>4-aminobutanoate</name>
        <dbReference type="ChEBI" id="CHEBI:59888"/>
        <note>ligand shared between two neighboring rho subunits</note>
    </ligand>
</feature>
<feature type="glycosylation site" description="N-linked (GlcNAc...) asparagine" evidence="5">
    <location>
        <position position="120"/>
    </location>
</feature>
<feature type="glycosylation site" description="N-linked (GlcNAc...) asparagine" evidence="5">
    <location>
        <position position="254"/>
    </location>
</feature>
<feature type="disulfide bond" evidence="1">
    <location>
        <begin position="178"/>
        <end position="192"/>
    </location>
</feature>
<feature type="splice variant" id="VSP_044372" description="In isoform 2." evidence="6">
    <original>M</original>
    <variation>MVKPGGICPAAGPWKAACSIADIHRM</variation>
    <location>
        <position position="1"/>
    </location>
</feature>
<proteinExistence type="evidence at transcript level"/>
<protein>
    <recommendedName>
        <fullName evidence="2">Gamma-aminobutyric acid receptor subunit rho-2</fullName>
    </recommendedName>
    <alternativeName>
        <fullName>GABA(A) receptor subunit rho-2</fullName>
        <shortName>GABAAR subunit rho-2</shortName>
    </alternativeName>
    <alternativeName>
        <fullName evidence="3">GABA(C) receptor</fullName>
    </alternativeName>
</protein>
<sequence>MPYFSRLILFLFCLVVLVESRKPKKRRWTGQLETSKPSHLYKKNPDMTKIRHGKPQPLLRVDDHDFTMRPAFGGPAIPVGVDVQVESLDSISEVDMDFTMTLYLRHYWKDERLAFPSASNKSMTFDGRLVKKIWVPDVFFVHSKRSFIHDTTTDNIMLRVFPDGQVLYSMRITVTAMCNMDFSHFPLDSQTCSLELESYAYTDEDLMLYWKNGDESLKTDEKISLSQFLIQKFHTTSRLAFYSSTGWYNRLYINFTLRRHIFFFLLQTYFPATLMVMLSWVSFWIDRRAVPARVSLGITTVLTMSTIITGVNASMPRVSYIKAVDIYLWVSFVFVFLSVLEYAAVNYLTTVQERKERKLQEKFPCMCGMLHSRTMMLDGSYSESEANSLAGYPRSHILPEEERQDKIVVHLALSNESSSSRKKGLLKGQVGLRIFQNTHAIDKYSRLIFPASYIFFNLIYWSVFA</sequence>
<gene>
    <name type="primary">GABRR2</name>
</gene>
<dbReference type="EMBL" id="BC122770">
    <property type="protein sequence ID" value="AAI22771.1"/>
    <property type="molecule type" value="mRNA"/>
</dbReference>
<dbReference type="RefSeq" id="NP_001071414.2">
    <molecule id="Q0II76-1"/>
    <property type="nucleotide sequence ID" value="NM_001077946.1"/>
</dbReference>
<dbReference type="SMR" id="Q0II76"/>
<dbReference type="FunCoup" id="Q0II76">
    <property type="interactions" value="17"/>
</dbReference>
<dbReference type="STRING" id="9913.ENSBTAP00000024526"/>
<dbReference type="GlyCosmos" id="Q0II76">
    <property type="glycosylation" value="2 sites, No reported glycans"/>
</dbReference>
<dbReference type="GlyGen" id="Q0II76">
    <property type="glycosylation" value="2 sites"/>
</dbReference>
<dbReference type="PaxDb" id="9913-ENSBTAP00000047201"/>
<dbReference type="Ensembl" id="ENSBTAT00000024526.6">
    <molecule id="Q0II76-2"/>
    <property type="protein sequence ID" value="ENSBTAP00000024526.6"/>
    <property type="gene ID" value="ENSBTAG00000011672.6"/>
</dbReference>
<dbReference type="GeneID" id="522099"/>
<dbReference type="KEGG" id="bta:522099"/>
<dbReference type="CTD" id="2570"/>
<dbReference type="VEuPathDB" id="HostDB:ENSBTAG00000011672"/>
<dbReference type="eggNOG" id="KOG3643">
    <property type="taxonomic scope" value="Eukaryota"/>
</dbReference>
<dbReference type="GeneTree" id="ENSGT00940000156864"/>
<dbReference type="HOGENOM" id="CLU_010920_0_1_1"/>
<dbReference type="InParanoid" id="Q0II76"/>
<dbReference type="OrthoDB" id="442503at2759"/>
<dbReference type="Reactome" id="R-BTA-977443">
    <property type="pathway name" value="GABA receptor activation"/>
</dbReference>
<dbReference type="Proteomes" id="UP000009136">
    <property type="component" value="Chromosome 9"/>
</dbReference>
<dbReference type="Bgee" id="ENSBTAG00000011672">
    <property type="expression patterns" value="Expressed in retina and 53 other cell types or tissues"/>
</dbReference>
<dbReference type="GO" id="GO:0034707">
    <property type="term" value="C:chloride channel complex"/>
    <property type="evidence" value="ECO:0007669"/>
    <property type="project" value="UniProtKB-KW"/>
</dbReference>
<dbReference type="GO" id="GO:1902711">
    <property type="term" value="C:GABA-A receptor complex"/>
    <property type="evidence" value="ECO:0000318"/>
    <property type="project" value="GO_Central"/>
</dbReference>
<dbReference type="GO" id="GO:0097708">
    <property type="term" value="C:intracellular vesicle"/>
    <property type="evidence" value="ECO:0007669"/>
    <property type="project" value="Ensembl"/>
</dbReference>
<dbReference type="GO" id="GO:0045211">
    <property type="term" value="C:postsynaptic membrane"/>
    <property type="evidence" value="ECO:0007669"/>
    <property type="project" value="UniProtKB-SubCell"/>
</dbReference>
<dbReference type="GO" id="GO:0004890">
    <property type="term" value="F:GABA-A receptor activity"/>
    <property type="evidence" value="ECO:0000250"/>
    <property type="project" value="UniProtKB"/>
</dbReference>
<dbReference type="GO" id="GO:0022851">
    <property type="term" value="F:GABA-gated chloride ion channel activity"/>
    <property type="evidence" value="ECO:0000250"/>
    <property type="project" value="UniProtKB"/>
</dbReference>
<dbReference type="GO" id="GO:1902476">
    <property type="term" value="P:chloride transmembrane transport"/>
    <property type="evidence" value="ECO:0000318"/>
    <property type="project" value="GO_Central"/>
</dbReference>
<dbReference type="GO" id="GO:0007214">
    <property type="term" value="P:gamma-aminobutyric acid signaling pathway"/>
    <property type="evidence" value="ECO:0007669"/>
    <property type="project" value="Ensembl"/>
</dbReference>
<dbReference type="GO" id="GO:0007601">
    <property type="term" value="P:visual perception"/>
    <property type="evidence" value="ECO:0007669"/>
    <property type="project" value="Ensembl"/>
</dbReference>
<dbReference type="CDD" id="cd19005">
    <property type="entry name" value="LGIC_ECD_GABAAR_rho"/>
    <property type="match status" value="1"/>
</dbReference>
<dbReference type="CDD" id="cd19059">
    <property type="entry name" value="LGIC_TM_GABAAR_rho"/>
    <property type="match status" value="1"/>
</dbReference>
<dbReference type="FunFam" id="2.70.170.10:FF:000007">
    <property type="entry name" value="Gamma-aminobutyric acid type A receptor rho2 subunit"/>
    <property type="match status" value="1"/>
</dbReference>
<dbReference type="FunFam" id="1.20.58.390:FF:000005">
    <property type="entry name" value="Putative gamma-aminobutyric acid receptor subunit rho-2-like"/>
    <property type="match status" value="1"/>
</dbReference>
<dbReference type="Gene3D" id="2.70.170.10">
    <property type="entry name" value="Neurotransmitter-gated ion-channel ligand-binding domain"/>
    <property type="match status" value="1"/>
</dbReference>
<dbReference type="Gene3D" id="1.20.58.390">
    <property type="entry name" value="Neurotransmitter-gated ion-channel transmembrane domain"/>
    <property type="match status" value="1"/>
</dbReference>
<dbReference type="InterPro" id="IPR006028">
    <property type="entry name" value="GABAA/Glycine_rcpt"/>
</dbReference>
<dbReference type="InterPro" id="IPR008059">
    <property type="entry name" value="GABAAa_rho2_rcpt"/>
</dbReference>
<dbReference type="InterPro" id="IPR008057">
    <property type="entry name" value="GABAAa_rho_rcpt"/>
</dbReference>
<dbReference type="InterPro" id="IPR006202">
    <property type="entry name" value="Neur_chan_lig-bd"/>
</dbReference>
<dbReference type="InterPro" id="IPR036734">
    <property type="entry name" value="Neur_chan_lig-bd_sf"/>
</dbReference>
<dbReference type="InterPro" id="IPR006201">
    <property type="entry name" value="Neur_channel"/>
</dbReference>
<dbReference type="InterPro" id="IPR036719">
    <property type="entry name" value="Neuro-gated_channel_TM_sf"/>
</dbReference>
<dbReference type="InterPro" id="IPR038050">
    <property type="entry name" value="Neuro_actylchol_rec"/>
</dbReference>
<dbReference type="InterPro" id="IPR006029">
    <property type="entry name" value="Neurotrans-gated_channel_TM"/>
</dbReference>
<dbReference type="InterPro" id="IPR018000">
    <property type="entry name" value="Neurotransmitter_ion_chnl_CS"/>
</dbReference>
<dbReference type="NCBIfam" id="TIGR00860">
    <property type="entry name" value="LIC"/>
    <property type="match status" value="1"/>
</dbReference>
<dbReference type="PANTHER" id="PTHR18945">
    <property type="entry name" value="NEUROTRANSMITTER GATED ION CHANNEL"/>
    <property type="match status" value="1"/>
</dbReference>
<dbReference type="Pfam" id="PF02931">
    <property type="entry name" value="Neur_chan_LBD"/>
    <property type="match status" value="1"/>
</dbReference>
<dbReference type="Pfam" id="PF02932">
    <property type="entry name" value="Neur_chan_memb"/>
    <property type="match status" value="1"/>
</dbReference>
<dbReference type="PRINTS" id="PR00253">
    <property type="entry name" value="GABAARECEPTR"/>
</dbReference>
<dbReference type="PRINTS" id="PR01670">
    <property type="entry name" value="GABAARRHO"/>
</dbReference>
<dbReference type="PRINTS" id="PR01672">
    <property type="entry name" value="GABAARRHO2"/>
</dbReference>
<dbReference type="PRINTS" id="PR00252">
    <property type="entry name" value="NRIONCHANNEL"/>
</dbReference>
<dbReference type="SUPFAM" id="SSF90112">
    <property type="entry name" value="Neurotransmitter-gated ion-channel transmembrane pore"/>
    <property type="match status" value="1"/>
</dbReference>
<dbReference type="SUPFAM" id="SSF63712">
    <property type="entry name" value="Nicotinic receptor ligand binding domain-like"/>
    <property type="match status" value="1"/>
</dbReference>
<dbReference type="PROSITE" id="PS00236">
    <property type="entry name" value="NEUROTR_ION_CHANNEL"/>
    <property type="match status" value="1"/>
</dbReference>
<accession>Q0II76</accession>
<name>GBRR2_BOVIN</name>